<name>DEOC_CAEEL</name>
<gene>
    <name type="ORF">F09E5.3</name>
</gene>
<feature type="chain" id="PRO_0000057312" description="Putative deoxyribose-phosphate aldolase">
    <location>
        <begin position="1"/>
        <end position="303"/>
    </location>
</feature>
<feature type="active site" description="Proton donor/acceptor" evidence="2">
    <location>
        <position position="157"/>
    </location>
</feature>
<feature type="active site" description="Schiff-base intermediate with acetaldehyde" evidence="2">
    <location>
        <position position="220"/>
    </location>
</feature>
<feature type="active site" description="Proton donor/acceptor" evidence="2">
    <location>
        <position position="256"/>
    </location>
</feature>
<accession>Q19264</accession>
<proteinExistence type="inferred from homology"/>
<evidence type="ECO:0000250" key="1"/>
<evidence type="ECO:0000250" key="2">
    <source>
        <dbReference type="UniProtKB" id="P0A6L0"/>
    </source>
</evidence>
<evidence type="ECO:0000305" key="3"/>
<keyword id="KW-0456">Lyase</keyword>
<keyword id="KW-1185">Reference proteome</keyword>
<keyword id="KW-0704">Schiff base</keyword>
<reference key="1">
    <citation type="journal article" date="1998" name="Science">
        <title>Genome sequence of the nematode C. elegans: a platform for investigating biology.</title>
        <authorList>
            <consortium name="The C. elegans sequencing consortium"/>
        </authorList>
    </citation>
    <scope>NUCLEOTIDE SEQUENCE [LARGE SCALE GENOMIC DNA]</scope>
    <source>
        <strain>Bristol N2</strain>
    </source>
</reference>
<protein>
    <recommendedName>
        <fullName>Putative deoxyribose-phosphate aldolase</fullName>
        <shortName>DERA</shortName>
        <ecNumber>4.1.2.4</ecNumber>
    </recommendedName>
    <alternativeName>
        <fullName>2-deoxy-D-ribose 5-phosphate aldolase</fullName>
    </alternativeName>
    <alternativeName>
        <fullName>Phosphodeoxyriboaldolase</fullName>
        <shortName>Deoxyriboaldolase</shortName>
    </alternativeName>
</protein>
<dbReference type="EC" id="4.1.2.4"/>
<dbReference type="EMBL" id="FO081044">
    <property type="protein sequence ID" value="CCD68756.1"/>
    <property type="molecule type" value="Genomic_DNA"/>
</dbReference>
<dbReference type="PIR" id="T16004">
    <property type="entry name" value="T16004"/>
</dbReference>
<dbReference type="RefSeq" id="NP_495009.1">
    <property type="nucleotide sequence ID" value="NM_062608.8"/>
</dbReference>
<dbReference type="SMR" id="Q19264"/>
<dbReference type="BioGRID" id="39256">
    <property type="interactions" value="37"/>
</dbReference>
<dbReference type="FunCoup" id="Q19264">
    <property type="interactions" value="1999"/>
</dbReference>
<dbReference type="STRING" id="6239.F09E5.3.1"/>
<dbReference type="PaxDb" id="6239-F09E5.3"/>
<dbReference type="PeptideAtlas" id="Q19264"/>
<dbReference type="EnsemblMetazoa" id="F09E5.3.1">
    <property type="protein sequence ID" value="F09E5.3.1"/>
    <property type="gene ID" value="WBGene00017283"/>
</dbReference>
<dbReference type="GeneID" id="173911"/>
<dbReference type="KEGG" id="cel:CELE_F09E5.3"/>
<dbReference type="UCSC" id="F09E5.3.1">
    <property type="organism name" value="c. elegans"/>
</dbReference>
<dbReference type="AGR" id="WB:WBGene00017283"/>
<dbReference type="CTD" id="173911"/>
<dbReference type="WormBase" id="F09E5.3">
    <property type="protein sequence ID" value="CE02610"/>
    <property type="gene ID" value="WBGene00017283"/>
</dbReference>
<dbReference type="eggNOG" id="KOG3981">
    <property type="taxonomic scope" value="Eukaryota"/>
</dbReference>
<dbReference type="GeneTree" id="ENSGT00390000007878"/>
<dbReference type="HOGENOM" id="CLU_053595_3_0_1"/>
<dbReference type="InParanoid" id="Q19264"/>
<dbReference type="OMA" id="RYSGPDY"/>
<dbReference type="OrthoDB" id="70823at2759"/>
<dbReference type="PhylomeDB" id="Q19264"/>
<dbReference type="Reactome" id="R-CEL-6798695">
    <property type="pathway name" value="Neutrophil degranulation"/>
</dbReference>
<dbReference type="Reactome" id="R-CEL-71336">
    <property type="pathway name" value="Pentose phosphate pathway"/>
</dbReference>
<dbReference type="UniPathway" id="UPA00002">
    <property type="reaction ID" value="UER00468"/>
</dbReference>
<dbReference type="PRO" id="PR:Q19264"/>
<dbReference type="Proteomes" id="UP000001940">
    <property type="component" value="Chromosome II"/>
</dbReference>
<dbReference type="Bgee" id="WBGene00017283">
    <property type="expression patterns" value="Expressed in larva and 4 other cell types or tissues"/>
</dbReference>
<dbReference type="GO" id="GO:0005737">
    <property type="term" value="C:cytoplasm"/>
    <property type="evidence" value="ECO:0007669"/>
    <property type="project" value="InterPro"/>
</dbReference>
<dbReference type="GO" id="GO:0004139">
    <property type="term" value="F:deoxyribose-phosphate aldolase activity"/>
    <property type="evidence" value="ECO:0000318"/>
    <property type="project" value="GO_Central"/>
</dbReference>
<dbReference type="GO" id="GO:0016052">
    <property type="term" value="P:carbohydrate catabolic process"/>
    <property type="evidence" value="ECO:0000318"/>
    <property type="project" value="GO_Central"/>
</dbReference>
<dbReference type="GO" id="GO:0009264">
    <property type="term" value="P:deoxyribonucleotide catabolic process"/>
    <property type="evidence" value="ECO:0000318"/>
    <property type="project" value="GO_Central"/>
</dbReference>
<dbReference type="GO" id="GO:0046386">
    <property type="term" value="P:deoxyribose phosphate catabolic process"/>
    <property type="evidence" value="ECO:0007669"/>
    <property type="project" value="UniProtKB-UniPathway"/>
</dbReference>
<dbReference type="CDD" id="cd00959">
    <property type="entry name" value="DeoC"/>
    <property type="match status" value="1"/>
</dbReference>
<dbReference type="FunFam" id="3.20.20.70:FF:000106">
    <property type="entry name" value="Deoxyribose-phosphate aldolase"/>
    <property type="match status" value="1"/>
</dbReference>
<dbReference type="Gene3D" id="3.20.20.70">
    <property type="entry name" value="Aldolase class I"/>
    <property type="match status" value="1"/>
</dbReference>
<dbReference type="InterPro" id="IPR013785">
    <property type="entry name" value="Aldolase_TIM"/>
</dbReference>
<dbReference type="InterPro" id="IPR011343">
    <property type="entry name" value="DeoC"/>
</dbReference>
<dbReference type="InterPro" id="IPR002915">
    <property type="entry name" value="DeoC/FbaB/LacD_aldolase"/>
</dbReference>
<dbReference type="NCBIfam" id="TIGR00126">
    <property type="entry name" value="deoC"/>
    <property type="match status" value="1"/>
</dbReference>
<dbReference type="PANTHER" id="PTHR10889">
    <property type="entry name" value="DEOXYRIBOSE-PHOSPHATE ALDOLASE"/>
    <property type="match status" value="1"/>
</dbReference>
<dbReference type="PANTHER" id="PTHR10889:SF3">
    <property type="entry name" value="DEOXYRIBOSE-PHOSPHATE ALDOLASE"/>
    <property type="match status" value="1"/>
</dbReference>
<dbReference type="Pfam" id="PF01791">
    <property type="entry name" value="DeoC"/>
    <property type="match status" value="1"/>
</dbReference>
<dbReference type="PIRSF" id="PIRSF001357">
    <property type="entry name" value="DeoC"/>
    <property type="match status" value="1"/>
</dbReference>
<dbReference type="SMART" id="SM01133">
    <property type="entry name" value="DeoC"/>
    <property type="match status" value="1"/>
</dbReference>
<dbReference type="SUPFAM" id="SSF51569">
    <property type="entry name" value="Aldolase"/>
    <property type="match status" value="1"/>
</dbReference>
<comment type="function">
    <text evidence="1">Catalyzes a reversible aldol reaction between acetaldehyde and D-glyceraldehyde 3-phosphate to generate 2-deoxy-D-ribose 5-phosphate.</text>
</comment>
<comment type="catalytic activity">
    <reaction>
        <text>2-deoxy-D-ribose 5-phosphate = D-glyceraldehyde 3-phosphate + acetaldehyde</text>
        <dbReference type="Rhea" id="RHEA:12821"/>
        <dbReference type="ChEBI" id="CHEBI:15343"/>
        <dbReference type="ChEBI" id="CHEBI:59776"/>
        <dbReference type="ChEBI" id="CHEBI:62877"/>
        <dbReference type="EC" id="4.1.2.4"/>
    </reaction>
</comment>
<comment type="pathway">
    <text>Carbohydrate degradation; 2-deoxy-D-ribose 1-phosphate degradation; D-glyceraldehyde 3-phosphate and acetaldehyde from 2-deoxy-alpha-D-ribose 1-phosphate: step 2/2.</text>
</comment>
<comment type="similarity">
    <text evidence="3">Belongs to the DeoC/FbaB aldolase family. DeoC type 2 subfamily.</text>
</comment>
<organism>
    <name type="scientific">Caenorhabditis elegans</name>
    <dbReference type="NCBI Taxonomy" id="6239"/>
    <lineage>
        <taxon>Eukaryota</taxon>
        <taxon>Metazoa</taxon>
        <taxon>Ecdysozoa</taxon>
        <taxon>Nematoda</taxon>
        <taxon>Chromadorea</taxon>
        <taxon>Rhabditida</taxon>
        <taxon>Rhabditina</taxon>
        <taxon>Rhabditomorpha</taxon>
        <taxon>Rhabditoidea</taxon>
        <taxon>Rhabditidae</taxon>
        <taxon>Peloderinae</taxon>
        <taxon>Caenorhabditis</taxon>
    </lineage>
</organism>
<sequence length="303" mass="33087">MATIVPTLFSFVRDTYKGRFDVATFEREVGRDFDNQEIAQAISKYEQEAKNLRNKDEIRKVIQYIDLTTLNGDDTASKVVALAKRAINPVPTDPSIHCGSVCVYPQRIADVKKFLASSKLNSNITSVAGGFPSGQYHLKSKVLEVELSVADGATEIDIVISRASALDEDWKTVHDEVLACKKACGSAHLKTILATGELKTLSNVYRASWASILAGSDFIKTSTGKESVNATLEVAYVMCTAIKRWHELTGKKVGFKPAGGIKTVDEALSYVALVKDILGDEWLNPHLFRIGASSLLDDCLKGL</sequence>